<sequence length="298" mass="32972">MNQEVKSGKVLSPSTPWTQRPVPGIEVADEQQTLKATFTEPTIECPECHALVTRTAISFNAYVCPQCDEHLRMKARDRLNWFFDNVVAELGQEFSAKDPLKFVDSKPYPDRMREAQTKTGETEALIAMQGNLNGVDMIACAFEFDFMGGSMGTVVGDRFVKAAELAIEKRQPLICFAASGGARMQEGMLSLMQMARTSAAIQKLKDAGLPYIVVLTHPVYGGVTASLAMLGDIHIAEPKAMIGFAGKRVIEQTVRETLEEPFQRAEYLLDHGVVDQIVHRHALRDTVSRLVSKLMNLP</sequence>
<accession>B7I8K1</accession>
<keyword id="KW-0067">ATP-binding</keyword>
<keyword id="KW-0963">Cytoplasm</keyword>
<keyword id="KW-0275">Fatty acid biosynthesis</keyword>
<keyword id="KW-0276">Fatty acid metabolism</keyword>
<keyword id="KW-0444">Lipid biosynthesis</keyword>
<keyword id="KW-0443">Lipid metabolism</keyword>
<keyword id="KW-0479">Metal-binding</keyword>
<keyword id="KW-0547">Nucleotide-binding</keyword>
<keyword id="KW-0808">Transferase</keyword>
<keyword id="KW-0862">Zinc</keyword>
<keyword id="KW-0863">Zinc-finger</keyword>
<protein>
    <recommendedName>
        <fullName evidence="1">Acetyl-coenzyme A carboxylase carboxyl transferase subunit beta</fullName>
        <shortName evidence="1">ACCase subunit beta</shortName>
        <shortName evidence="1">Acetyl-CoA carboxylase carboxyltransferase subunit beta</shortName>
        <ecNumber evidence="1">2.1.3.15</ecNumber>
    </recommendedName>
</protein>
<comment type="function">
    <text evidence="1">Component of the acetyl coenzyme A carboxylase (ACC) complex. Biotin carboxylase (BC) catalyzes the carboxylation of biotin on its carrier protein (BCCP) and then the CO(2) group is transferred by the transcarboxylase to acetyl-CoA to form malonyl-CoA.</text>
</comment>
<comment type="catalytic activity">
    <reaction evidence="1">
        <text>N(6)-carboxybiotinyl-L-lysyl-[protein] + acetyl-CoA = N(6)-biotinyl-L-lysyl-[protein] + malonyl-CoA</text>
        <dbReference type="Rhea" id="RHEA:54728"/>
        <dbReference type="Rhea" id="RHEA-COMP:10505"/>
        <dbReference type="Rhea" id="RHEA-COMP:10506"/>
        <dbReference type="ChEBI" id="CHEBI:57288"/>
        <dbReference type="ChEBI" id="CHEBI:57384"/>
        <dbReference type="ChEBI" id="CHEBI:83144"/>
        <dbReference type="ChEBI" id="CHEBI:83145"/>
        <dbReference type="EC" id="2.1.3.15"/>
    </reaction>
</comment>
<comment type="cofactor">
    <cofactor evidence="1">
        <name>Zn(2+)</name>
        <dbReference type="ChEBI" id="CHEBI:29105"/>
    </cofactor>
    <text evidence="1">Binds 1 zinc ion per subunit.</text>
</comment>
<comment type="pathway">
    <text evidence="1">Lipid metabolism; malonyl-CoA biosynthesis; malonyl-CoA from acetyl-CoA: step 1/1.</text>
</comment>
<comment type="subunit">
    <text evidence="1">Acetyl-CoA carboxylase is a heterohexamer composed of biotin carboxyl carrier protein (AccB), biotin carboxylase (AccC) and two subunits each of ACCase subunit alpha (AccA) and ACCase subunit beta (AccD).</text>
</comment>
<comment type="subcellular location">
    <subcellularLocation>
        <location evidence="1">Cytoplasm</location>
    </subcellularLocation>
</comment>
<comment type="similarity">
    <text evidence="1">Belongs to the AccD/PCCB family.</text>
</comment>
<dbReference type="EC" id="2.1.3.15" evidence="1"/>
<dbReference type="EMBL" id="CP001182">
    <property type="protein sequence ID" value="ACJ41944.1"/>
    <property type="molecule type" value="Genomic_DNA"/>
</dbReference>
<dbReference type="RefSeq" id="WP_001071168.1">
    <property type="nucleotide sequence ID" value="NC_011586.2"/>
</dbReference>
<dbReference type="SMR" id="B7I8K1"/>
<dbReference type="GeneID" id="92895146"/>
<dbReference type="KEGG" id="abn:AB57_3372"/>
<dbReference type="HOGENOM" id="CLU_015486_1_0_6"/>
<dbReference type="UniPathway" id="UPA00655">
    <property type="reaction ID" value="UER00711"/>
</dbReference>
<dbReference type="Proteomes" id="UP000007094">
    <property type="component" value="Chromosome"/>
</dbReference>
<dbReference type="GO" id="GO:0009329">
    <property type="term" value="C:acetate CoA-transferase complex"/>
    <property type="evidence" value="ECO:0007669"/>
    <property type="project" value="TreeGrafter"/>
</dbReference>
<dbReference type="GO" id="GO:0003989">
    <property type="term" value="F:acetyl-CoA carboxylase activity"/>
    <property type="evidence" value="ECO:0007669"/>
    <property type="project" value="InterPro"/>
</dbReference>
<dbReference type="GO" id="GO:0005524">
    <property type="term" value="F:ATP binding"/>
    <property type="evidence" value="ECO:0007669"/>
    <property type="project" value="UniProtKB-KW"/>
</dbReference>
<dbReference type="GO" id="GO:0016743">
    <property type="term" value="F:carboxyl- or carbamoyltransferase activity"/>
    <property type="evidence" value="ECO:0007669"/>
    <property type="project" value="UniProtKB-UniRule"/>
</dbReference>
<dbReference type="GO" id="GO:0008270">
    <property type="term" value="F:zinc ion binding"/>
    <property type="evidence" value="ECO:0007669"/>
    <property type="project" value="UniProtKB-UniRule"/>
</dbReference>
<dbReference type="GO" id="GO:0006633">
    <property type="term" value="P:fatty acid biosynthetic process"/>
    <property type="evidence" value="ECO:0007669"/>
    <property type="project" value="UniProtKB-KW"/>
</dbReference>
<dbReference type="GO" id="GO:2001295">
    <property type="term" value="P:malonyl-CoA biosynthetic process"/>
    <property type="evidence" value="ECO:0007669"/>
    <property type="project" value="UniProtKB-UniRule"/>
</dbReference>
<dbReference type="Gene3D" id="3.90.226.10">
    <property type="entry name" value="2-enoyl-CoA Hydratase, Chain A, domain 1"/>
    <property type="match status" value="1"/>
</dbReference>
<dbReference type="HAMAP" id="MF_01395">
    <property type="entry name" value="AcetylCoA_CT_beta"/>
    <property type="match status" value="1"/>
</dbReference>
<dbReference type="InterPro" id="IPR034733">
    <property type="entry name" value="AcCoA_carboxyl_beta"/>
</dbReference>
<dbReference type="InterPro" id="IPR000438">
    <property type="entry name" value="Acetyl_CoA_COase_Trfase_b_su"/>
</dbReference>
<dbReference type="InterPro" id="IPR029045">
    <property type="entry name" value="ClpP/crotonase-like_dom_sf"/>
</dbReference>
<dbReference type="InterPro" id="IPR011762">
    <property type="entry name" value="COA_CT_N"/>
</dbReference>
<dbReference type="NCBIfam" id="TIGR00515">
    <property type="entry name" value="accD"/>
    <property type="match status" value="1"/>
</dbReference>
<dbReference type="PANTHER" id="PTHR42995">
    <property type="entry name" value="ACETYL-COENZYME A CARBOXYLASE CARBOXYL TRANSFERASE SUBUNIT BETA, CHLOROPLASTIC"/>
    <property type="match status" value="1"/>
</dbReference>
<dbReference type="PANTHER" id="PTHR42995:SF5">
    <property type="entry name" value="ACETYL-COENZYME A CARBOXYLASE CARBOXYL TRANSFERASE SUBUNIT BETA, CHLOROPLASTIC"/>
    <property type="match status" value="1"/>
</dbReference>
<dbReference type="Pfam" id="PF01039">
    <property type="entry name" value="Carboxyl_trans"/>
    <property type="match status" value="1"/>
</dbReference>
<dbReference type="PRINTS" id="PR01070">
    <property type="entry name" value="ACCCTRFRASEB"/>
</dbReference>
<dbReference type="SUPFAM" id="SSF52096">
    <property type="entry name" value="ClpP/crotonase"/>
    <property type="match status" value="1"/>
</dbReference>
<dbReference type="PROSITE" id="PS50980">
    <property type="entry name" value="COA_CT_NTER"/>
    <property type="match status" value="1"/>
</dbReference>
<feature type="chain" id="PRO_0000389654" description="Acetyl-coenzyme A carboxylase carboxyl transferase subunit beta">
    <location>
        <begin position="1"/>
        <end position="298"/>
    </location>
</feature>
<feature type="domain" description="CoA carboxyltransferase N-terminal" evidence="2">
    <location>
        <begin position="41"/>
        <end position="298"/>
    </location>
</feature>
<feature type="zinc finger region" description="C4-type" evidence="1">
    <location>
        <begin position="45"/>
        <end position="67"/>
    </location>
</feature>
<feature type="region of interest" description="Disordered" evidence="3">
    <location>
        <begin position="1"/>
        <end position="21"/>
    </location>
</feature>
<feature type="binding site" evidence="1">
    <location>
        <position position="45"/>
    </location>
    <ligand>
        <name>Zn(2+)</name>
        <dbReference type="ChEBI" id="CHEBI:29105"/>
    </ligand>
</feature>
<feature type="binding site" evidence="1">
    <location>
        <position position="48"/>
    </location>
    <ligand>
        <name>Zn(2+)</name>
        <dbReference type="ChEBI" id="CHEBI:29105"/>
    </ligand>
</feature>
<feature type="binding site" evidence="1">
    <location>
        <position position="64"/>
    </location>
    <ligand>
        <name>Zn(2+)</name>
        <dbReference type="ChEBI" id="CHEBI:29105"/>
    </ligand>
</feature>
<feature type="binding site" evidence="1">
    <location>
        <position position="67"/>
    </location>
    <ligand>
        <name>Zn(2+)</name>
        <dbReference type="ChEBI" id="CHEBI:29105"/>
    </ligand>
</feature>
<organism>
    <name type="scientific">Acinetobacter baumannii (strain AB0057)</name>
    <dbReference type="NCBI Taxonomy" id="480119"/>
    <lineage>
        <taxon>Bacteria</taxon>
        <taxon>Pseudomonadati</taxon>
        <taxon>Pseudomonadota</taxon>
        <taxon>Gammaproteobacteria</taxon>
        <taxon>Moraxellales</taxon>
        <taxon>Moraxellaceae</taxon>
        <taxon>Acinetobacter</taxon>
        <taxon>Acinetobacter calcoaceticus/baumannii complex</taxon>
    </lineage>
</organism>
<reference key="1">
    <citation type="journal article" date="2008" name="J. Bacteriol.">
        <title>Comparative genome sequence analysis of multidrug-resistant Acinetobacter baumannii.</title>
        <authorList>
            <person name="Adams M.D."/>
            <person name="Goglin K."/>
            <person name="Molyneaux N."/>
            <person name="Hujer K.M."/>
            <person name="Lavender H."/>
            <person name="Jamison J.J."/>
            <person name="MacDonald I.J."/>
            <person name="Martin K.M."/>
            <person name="Russo T."/>
            <person name="Campagnari A.A."/>
            <person name="Hujer A.M."/>
            <person name="Bonomo R.A."/>
            <person name="Gill S.R."/>
        </authorList>
    </citation>
    <scope>NUCLEOTIDE SEQUENCE [LARGE SCALE GENOMIC DNA]</scope>
    <source>
        <strain>AB0057</strain>
    </source>
</reference>
<evidence type="ECO:0000255" key="1">
    <source>
        <dbReference type="HAMAP-Rule" id="MF_01395"/>
    </source>
</evidence>
<evidence type="ECO:0000255" key="2">
    <source>
        <dbReference type="PROSITE-ProRule" id="PRU01136"/>
    </source>
</evidence>
<evidence type="ECO:0000256" key="3">
    <source>
        <dbReference type="SAM" id="MobiDB-lite"/>
    </source>
</evidence>
<name>ACCD_ACIB5</name>
<gene>
    <name evidence="1" type="primary">accD</name>
    <name type="ordered locus">AB57_3372</name>
</gene>
<proteinExistence type="inferred from homology"/>